<feature type="chain" id="PRO_1000082422" description="D-alanine--D-alanyl carrier protein ligase">
    <location>
        <begin position="1"/>
        <end position="504"/>
    </location>
</feature>
<feature type="binding site" evidence="1">
    <location>
        <begin position="152"/>
        <end position="153"/>
    </location>
    <ligand>
        <name>ATP</name>
        <dbReference type="ChEBI" id="CHEBI:30616"/>
    </ligand>
</feature>
<feature type="binding site" evidence="1">
    <location>
        <position position="197"/>
    </location>
    <ligand>
        <name>D-alanine</name>
        <dbReference type="ChEBI" id="CHEBI:57416"/>
    </ligand>
</feature>
<feature type="binding site" evidence="1">
    <location>
        <begin position="292"/>
        <end position="297"/>
    </location>
    <ligand>
        <name>ATP</name>
        <dbReference type="ChEBI" id="CHEBI:30616"/>
    </ligand>
</feature>
<feature type="binding site" evidence="1">
    <location>
        <position position="301"/>
    </location>
    <ligand>
        <name>D-alanine</name>
        <dbReference type="ChEBI" id="CHEBI:57416"/>
    </ligand>
</feature>
<feature type="binding site" evidence="1">
    <location>
        <position position="383"/>
    </location>
    <ligand>
        <name>ATP</name>
        <dbReference type="ChEBI" id="CHEBI:30616"/>
    </ligand>
</feature>
<feature type="binding site" evidence="1">
    <location>
        <begin position="394"/>
        <end position="397"/>
    </location>
    <ligand>
        <name>ATP</name>
        <dbReference type="ChEBI" id="CHEBI:30616"/>
    </ligand>
</feature>
<feature type="binding site" evidence="1">
    <location>
        <position position="492"/>
    </location>
    <ligand>
        <name>ATP</name>
        <dbReference type="ChEBI" id="CHEBI:30616"/>
    </ligand>
</feature>
<feature type="binding site" evidence="1">
    <location>
        <position position="492"/>
    </location>
    <ligand>
        <name>D-alanine</name>
        <dbReference type="ChEBI" id="CHEBI:57416"/>
    </ligand>
</feature>
<name>DLTA_BACCN</name>
<accession>A7GMR0</accession>
<sequence length="504" mass="56475">MKLLEQIEKWATETPDQTAFVWRDAKITYKQLKDDSDALAHWISSEYPDDSSPIMVYGHMQPDMIISFLGCVKAGHAYIPVDLSIPADRVLRIAESSGAKLLLSAAELTVTDLPVRTVSQNNLKDIFFTHKGKIPNPEHAVKDDENFYIIYTSGSTGNPKGVQITHNCLVSFTKWAIQDFNLQTGQVFLNQAPFSFDLSVMDIYPSLVTGGTLWAIDKDMIARPKDLFASLKQSNIQVWTSTPSFAEMCLMETSFSESMLPNMKTFLFCGEVLPNEVAKKLMERFPKATIMNTYGPTEATVAVTSIPVTQEVIDTYQSLPVGYCKSDCRLLIMKEDGTIASDGEKGEIVIVGPSVSVGYLGSPELTEKSFTMIDGERAYKTGDAGYMENGLLFYNGRLDFQIKLHGYRMELEEIEHHLRACSYVEGAVIVPIKKGEKYDYLLAVVVPGEHSFEKEFKLTSAIKKELNERLPNYMIPRKFMYQSSIPMTPNGKVDRKKLLSEVTA</sequence>
<gene>
    <name evidence="1" type="primary">dltA</name>
    <name type="ordered locus">Bcer98_1092</name>
</gene>
<protein>
    <recommendedName>
        <fullName evidence="1">D-alanine--D-alanyl carrier protein ligase</fullName>
        <shortName evidence="1">DCL</shortName>
        <ecNumber evidence="1">6.2.1.54</ecNumber>
    </recommendedName>
    <alternativeName>
        <fullName evidence="1">D-alanine--poly(phosphoribitol) ligase subunit 1</fullName>
    </alternativeName>
    <alternativeName>
        <fullName evidence="1">D-alanine-activating enzyme</fullName>
        <shortName evidence="1">DAE</shortName>
    </alternativeName>
</protein>
<organism>
    <name type="scientific">Bacillus cytotoxicus (strain DSM 22905 / CIP 110041 / 391-98 / NVH 391-98)</name>
    <dbReference type="NCBI Taxonomy" id="315749"/>
    <lineage>
        <taxon>Bacteria</taxon>
        <taxon>Bacillati</taxon>
        <taxon>Bacillota</taxon>
        <taxon>Bacilli</taxon>
        <taxon>Bacillales</taxon>
        <taxon>Bacillaceae</taxon>
        <taxon>Bacillus</taxon>
        <taxon>Bacillus cereus group</taxon>
    </lineage>
</organism>
<keyword id="KW-0067">ATP-binding</keyword>
<keyword id="KW-0963">Cytoplasm</keyword>
<keyword id="KW-0436">Ligase</keyword>
<keyword id="KW-0547">Nucleotide-binding</keyword>
<evidence type="ECO:0000255" key="1">
    <source>
        <dbReference type="HAMAP-Rule" id="MF_00593"/>
    </source>
</evidence>
<reference key="1">
    <citation type="journal article" date="2008" name="Chem. Biol. Interact.">
        <title>Extending the Bacillus cereus group genomics to putative food-borne pathogens of different toxicity.</title>
        <authorList>
            <person name="Lapidus A."/>
            <person name="Goltsman E."/>
            <person name="Auger S."/>
            <person name="Galleron N."/>
            <person name="Segurens B."/>
            <person name="Dossat C."/>
            <person name="Land M.L."/>
            <person name="Broussolle V."/>
            <person name="Brillard J."/>
            <person name="Guinebretiere M.-H."/>
            <person name="Sanchis V."/>
            <person name="Nguen-the C."/>
            <person name="Lereclus D."/>
            <person name="Richardson P."/>
            <person name="Wincker P."/>
            <person name="Weissenbach J."/>
            <person name="Ehrlich S.D."/>
            <person name="Sorokin A."/>
        </authorList>
    </citation>
    <scope>NUCLEOTIDE SEQUENCE [LARGE SCALE GENOMIC DNA]</scope>
    <source>
        <strain>DSM 22905 / CIP 110041 / 391-98 / NVH 391-98</strain>
    </source>
</reference>
<dbReference type="EC" id="6.2.1.54" evidence="1"/>
<dbReference type="EMBL" id="CP000764">
    <property type="protein sequence ID" value="ABS21418.1"/>
    <property type="molecule type" value="Genomic_DNA"/>
</dbReference>
<dbReference type="RefSeq" id="WP_011984171.1">
    <property type="nucleotide sequence ID" value="NC_009674.1"/>
</dbReference>
<dbReference type="SMR" id="A7GMR0"/>
<dbReference type="STRING" id="315749.Bcer98_1092"/>
<dbReference type="GeneID" id="33896449"/>
<dbReference type="KEGG" id="bcy:Bcer98_1092"/>
<dbReference type="eggNOG" id="COG1020">
    <property type="taxonomic scope" value="Bacteria"/>
</dbReference>
<dbReference type="HOGENOM" id="CLU_000022_2_12_9"/>
<dbReference type="OrthoDB" id="9765680at2"/>
<dbReference type="UniPathway" id="UPA00556"/>
<dbReference type="Proteomes" id="UP000002300">
    <property type="component" value="Chromosome"/>
</dbReference>
<dbReference type="GO" id="GO:0005737">
    <property type="term" value="C:cytoplasm"/>
    <property type="evidence" value="ECO:0007669"/>
    <property type="project" value="UniProtKB-SubCell"/>
</dbReference>
<dbReference type="GO" id="GO:0005524">
    <property type="term" value="F:ATP binding"/>
    <property type="evidence" value="ECO:0007669"/>
    <property type="project" value="UniProtKB-KW"/>
</dbReference>
<dbReference type="GO" id="GO:0047473">
    <property type="term" value="F:D-alanine [D-alanyl carrier protein] ligase activity"/>
    <property type="evidence" value="ECO:0007669"/>
    <property type="project" value="UniProtKB-UniRule"/>
</dbReference>
<dbReference type="GO" id="GO:0070395">
    <property type="term" value="P:lipoteichoic acid biosynthetic process"/>
    <property type="evidence" value="ECO:0007669"/>
    <property type="project" value="UniProtKB-UniRule"/>
</dbReference>
<dbReference type="CDD" id="cd05945">
    <property type="entry name" value="DltA"/>
    <property type="match status" value="1"/>
</dbReference>
<dbReference type="FunFam" id="3.30.300.30:FF:000012">
    <property type="entry name" value="D-alanine--D-alanyl carrier protein ligase"/>
    <property type="match status" value="1"/>
</dbReference>
<dbReference type="FunFam" id="3.40.50.12780:FF:000015">
    <property type="entry name" value="D-alanine--D-alanyl carrier protein ligase"/>
    <property type="match status" value="1"/>
</dbReference>
<dbReference type="Gene3D" id="3.30.300.30">
    <property type="match status" value="1"/>
</dbReference>
<dbReference type="Gene3D" id="3.40.50.12780">
    <property type="entry name" value="N-terminal domain of ligase-like"/>
    <property type="match status" value="1"/>
</dbReference>
<dbReference type="HAMAP" id="MF_00593">
    <property type="entry name" value="DltA"/>
    <property type="match status" value="1"/>
</dbReference>
<dbReference type="InterPro" id="IPR010071">
    <property type="entry name" value="AA_adenyl_dom"/>
</dbReference>
<dbReference type="InterPro" id="IPR025110">
    <property type="entry name" value="AMP-bd_C"/>
</dbReference>
<dbReference type="InterPro" id="IPR045851">
    <property type="entry name" value="AMP-bd_C_sf"/>
</dbReference>
<dbReference type="InterPro" id="IPR020845">
    <property type="entry name" value="AMP-binding_CS"/>
</dbReference>
<dbReference type="InterPro" id="IPR000873">
    <property type="entry name" value="AMP-dep_synth/lig_dom"/>
</dbReference>
<dbReference type="InterPro" id="IPR042099">
    <property type="entry name" value="ANL_N_sf"/>
</dbReference>
<dbReference type="InterPro" id="IPR010072">
    <property type="entry name" value="DltA"/>
</dbReference>
<dbReference type="InterPro" id="IPR044507">
    <property type="entry name" value="DltA-like"/>
</dbReference>
<dbReference type="NCBIfam" id="TIGR01733">
    <property type="entry name" value="AA-adenyl-dom"/>
    <property type="match status" value="1"/>
</dbReference>
<dbReference type="NCBIfam" id="TIGR01734">
    <property type="entry name" value="D-ala-DACP-lig"/>
    <property type="match status" value="1"/>
</dbReference>
<dbReference type="NCBIfam" id="NF003417">
    <property type="entry name" value="PRK04813.1"/>
    <property type="match status" value="1"/>
</dbReference>
<dbReference type="PANTHER" id="PTHR45398">
    <property type="match status" value="1"/>
</dbReference>
<dbReference type="PANTHER" id="PTHR45398:SF1">
    <property type="entry name" value="ENZYME, PUTATIVE (JCVI)-RELATED"/>
    <property type="match status" value="1"/>
</dbReference>
<dbReference type="Pfam" id="PF00501">
    <property type="entry name" value="AMP-binding"/>
    <property type="match status" value="1"/>
</dbReference>
<dbReference type="Pfam" id="PF13193">
    <property type="entry name" value="AMP-binding_C"/>
    <property type="match status" value="1"/>
</dbReference>
<dbReference type="SUPFAM" id="SSF56801">
    <property type="entry name" value="Acetyl-CoA synthetase-like"/>
    <property type="match status" value="1"/>
</dbReference>
<dbReference type="PROSITE" id="PS00455">
    <property type="entry name" value="AMP_BINDING"/>
    <property type="match status" value="1"/>
</dbReference>
<comment type="function">
    <text evidence="1">Catalyzes the first step in the D-alanylation of lipoteichoic acid (LTA), the activation of D-alanine and its transfer onto the D-alanyl carrier protein (Dcp) DltC. In an ATP-dependent two-step reaction, forms a high energy D-alanyl-AMP intermediate, followed by transfer of the D-alanyl residue as a thiol ester to the phosphopantheinyl prosthetic group of the Dcp. D-alanylation of LTA plays an important role in modulating the properties of the cell wall in Gram-positive bacteria, influencing the net charge of the cell wall.</text>
</comment>
<comment type="catalytic activity">
    <reaction evidence="1">
        <text>holo-[D-alanyl-carrier protein] + D-alanine + ATP = D-alanyl-[D-alanyl-carrier protein] + AMP + diphosphate</text>
        <dbReference type="Rhea" id="RHEA:55132"/>
        <dbReference type="Rhea" id="RHEA-COMP:14102"/>
        <dbReference type="Rhea" id="RHEA-COMP:14103"/>
        <dbReference type="ChEBI" id="CHEBI:30616"/>
        <dbReference type="ChEBI" id="CHEBI:33019"/>
        <dbReference type="ChEBI" id="CHEBI:57416"/>
        <dbReference type="ChEBI" id="CHEBI:64479"/>
        <dbReference type="ChEBI" id="CHEBI:138620"/>
        <dbReference type="ChEBI" id="CHEBI:456215"/>
        <dbReference type="EC" id="6.2.1.54"/>
    </reaction>
</comment>
<comment type="pathway">
    <text evidence="1">Cell wall biogenesis; lipoteichoic acid biosynthesis.</text>
</comment>
<comment type="subcellular location">
    <subcellularLocation>
        <location evidence="1">Cytoplasm</location>
    </subcellularLocation>
</comment>
<comment type="similarity">
    <text evidence="1">Belongs to the ATP-dependent AMP-binding enzyme family. DltA subfamily.</text>
</comment>
<proteinExistence type="inferred from homology"/>